<dbReference type="EC" id="6.3.2.8" evidence="1"/>
<dbReference type="EMBL" id="AP009240">
    <property type="protein sequence ID" value="BAG75617.1"/>
    <property type="molecule type" value="Genomic_DNA"/>
</dbReference>
<dbReference type="RefSeq" id="WP_001096040.1">
    <property type="nucleotide sequence ID" value="NC_011415.1"/>
</dbReference>
<dbReference type="SMR" id="B6HZ68"/>
<dbReference type="KEGG" id="ecy:ECSE_0093"/>
<dbReference type="HOGENOM" id="CLU_028104_2_2_6"/>
<dbReference type="UniPathway" id="UPA00219"/>
<dbReference type="Proteomes" id="UP000008199">
    <property type="component" value="Chromosome"/>
</dbReference>
<dbReference type="GO" id="GO:0005737">
    <property type="term" value="C:cytoplasm"/>
    <property type="evidence" value="ECO:0007669"/>
    <property type="project" value="UniProtKB-SubCell"/>
</dbReference>
<dbReference type="GO" id="GO:0005524">
    <property type="term" value="F:ATP binding"/>
    <property type="evidence" value="ECO:0007669"/>
    <property type="project" value="UniProtKB-UniRule"/>
</dbReference>
<dbReference type="GO" id="GO:0008763">
    <property type="term" value="F:UDP-N-acetylmuramate-L-alanine ligase activity"/>
    <property type="evidence" value="ECO:0007669"/>
    <property type="project" value="UniProtKB-UniRule"/>
</dbReference>
<dbReference type="GO" id="GO:0051301">
    <property type="term" value="P:cell division"/>
    <property type="evidence" value="ECO:0007669"/>
    <property type="project" value="UniProtKB-KW"/>
</dbReference>
<dbReference type="GO" id="GO:0071555">
    <property type="term" value="P:cell wall organization"/>
    <property type="evidence" value="ECO:0007669"/>
    <property type="project" value="UniProtKB-KW"/>
</dbReference>
<dbReference type="GO" id="GO:0009252">
    <property type="term" value="P:peptidoglycan biosynthetic process"/>
    <property type="evidence" value="ECO:0007669"/>
    <property type="project" value="UniProtKB-UniRule"/>
</dbReference>
<dbReference type="GO" id="GO:0008360">
    <property type="term" value="P:regulation of cell shape"/>
    <property type="evidence" value="ECO:0007669"/>
    <property type="project" value="UniProtKB-KW"/>
</dbReference>
<dbReference type="FunFam" id="3.40.1190.10:FF:000001">
    <property type="entry name" value="UDP-N-acetylmuramate--L-alanine ligase"/>
    <property type="match status" value="1"/>
</dbReference>
<dbReference type="FunFam" id="3.40.50.720:FF:000046">
    <property type="entry name" value="UDP-N-acetylmuramate--L-alanine ligase"/>
    <property type="match status" value="1"/>
</dbReference>
<dbReference type="FunFam" id="3.90.190.20:FF:000001">
    <property type="entry name" value="UDP-N-acetylmuramate--L-alanine ligase"/>
    <property type="match status" value="1"/>
</dbReference>
<dbReference type="Gene3D" id="3.90.190.20">
    <property type="entry name" value="Mur ligase, C-terminal domain"/>
    <property type="match status" value="1"/>
</dbReference>
<dbReference type="Gene3D" id="3.40.1190.10">
    <property type="entry name" value="Mur-like, catalytic domain"/>
    <property type="match status" value="1"/>
</dbReference>
<dbReference type="Gene3D" id="3.40.50.720">
    <property type="entry name" value="NAD(P)-binding Rossmann-like Domain"/>
    <property type="match status" value="1"/>
</dbReference>
<dbReference type="HAMAP" id="MF_00046">
    <property type="entry name" value="MurC"/>
    <property type="match status" value="1"/>
</dbReference>
<dbReference type="InterPro" id="IPR036565">
    <property type="entry name" value="Mur-like_cat_sf"/>
</dbReference>
<dbReference type="InterPro" id="IPR004101">
    <property type="entry name" value="Mur_ligase_C"/>
</dbReference>
<dbReference type="InterPro" id="IPR036615">
    <property type="entry name" value="Mur_ligase_C_dom_sf"/>
</dbReference>
<dbReference type="InterPro" id="IPR013221">
    <property type="entry name" value="Mur_ligase_cen"/>
</dbReference>
<dbReference type="InterPro" id="IPR000713">
    <property type="entry name" value="Mur_ligase_N"/>
</dbReference>
<dbReference type="InterPro" id="IPR050061">
    <property type="entry name" value="MurCDEF_pg_biosynth"/>
</dbReference>
<dbReference type="InterPro" id="IPR005758">
    <property type="entry name" value="UDP-N-AcMur_Ala_ligase_MurC"/>
</dbReference>
<dbReference type="NCBIfam" id="TIGR01082">
    <property type="entry name" value="murC"/>
    <property type="match status" value="1"/>
</dbReference>
<dbReference type="PANTHER" id="PTHR43445:SF3">
    <property type="entry name" value="UDP-N-ACETYLMURAMATE--L-ALANINE LIGASE"/>
    <property type="match status" value="1"/>
</dbReference>
<dbReference type="PANTHER" id="PTHR43445">
    <property type="entry name" value="UDP-N-ACETYLMURAMATE--L-ALANINE LIGASE-RELATED"/>
    <property type="match status" value="1"/>
</dbReference>
<dbReference type="Pfam" id="PF01225">
    <property type="entry name" value="Mur_ligase"/>
    <property type="match status" value="1"/>
</dbReference>
<dbReference type="Pfam" id="PF02875">
    <property type="entry name" value="Mur_ligase_C"/>
    <property type="match status" value="1"/>
</dbReference>
<dbReference type="Pfam" id="PF08245">
    <property type="entry name" value="Mur_ligase_M"/>
    <property type="match status" value="1"/>
</dbReference>
<dbReference type="SUPFAM" id="SSF51984">
    <property type="entry name" value="MurCD N-terminal domain"/>
    <property type="match status" value="1"/>
</dbReference>
<dbReference type="SUPFAM" id="SSF53623">
    <property type="entry name" value="MurD-like peptide ligases, catalytic domain"/>
    <property type="match status" value="1"/>
</dbReference>
<dbReference type="SUPFAM" id="SSF53244">
    <property type="entry name" value="MurD-like peptide ligases, peptide-binding domain"/>
    <property type="match status" value="1"/>
</dbReference>
<evidence type="ECO:0000255" key="1">
    <source>
        <dbReference type="HAMAP-Rule" id="MF_00046"/>
    </source>
</evidence>
<comment type="function">
    <text evidence="1">Cell wall formation.</text>
</comment>
<comment type="catalytic activity">
    <reaction evidence="1">
        <text>UDP-N-acetyl-alpha-D-muramate + L-alanine + ATP = UDP-N-acetyl-alpha-D-muramoyl-L-alanine + ADP + phosphate + H(+)</text>
        <dbReference type="Rhea" id="RHEA:23372"/>
        <dbReference type="ChEBI" id="CHEBI:15378"/>
        <dbReference type="ChEBI" id="CHEBI:30616"/>
        <dbReference type="ChEBI" id="CHEBI:43474"/>
        <dbReference type="ChEBI" id="CHEBI:57972"/>
        <dbReference type="ChEBI" id="CHEBI:70757"/>
        <dbReference type="ChEBI" id="CHEBI:83898"/>
        <dbReference type="ChEBI" id="CHEBI:456216"/>
        <dbReference type="EC" id="6.3.2.8"/>
    </reaction>
</comment>
<comment type="pathway">
    <text evidence="1">Cell wall biogenesis; peptidoglycan biosynthesis.</text>
</comment>
<comment type="subcellular location">
    <subcellularLocation>
        <location evidence="1">Cytoplasm</location>
    </subcellularLocation>
</comment>
<comment type="similarity">
    <text evidence="1">Belongs to the MurCDEF family.</text>
</comment>
<name>MURC_ECOSE</name>
<organism>
    <name type="scientific">Escherichia coli (strain SE11)</name>
    <dbReference type="NCBI Taxonomy" id="409438"/>
    <lineage>
        <taxon>Bacteria</taxon>
        <taxon>Pseudomonadati</taxon>
        <taxon>Pseudomonadota</taxon>
        <taxon>Gammaproteobacteria</taxon>
        <taxon>Enterobacterales</taxon>
        <taxon>Enterobacteriaceae</taxon>
        <taxon>Escherichia</taxon>
    </lineage>
</organism>
<proteinExistence type="inferred from homology"/>
<protein>
    <recommendedName>
        <fullName evidence="1">UDP-N-acetylmuramate--L-alanine ligase</fullName>
        <ecNumber evidence="1">6.3.2.8</ecNumber>
    </recommendedName>
    <alternativeName>
        <fullName evidence="1">UDP-N-acetylmuramoyl-L-alanine synthetase</fullName>
    </alternativeName>
</protein>
<gene>
    <name evidence="1" type="primary">murC</name>
    <name type="ordered locus">ECSE_0093</name>
</gene>
<feature type="chain" id="PRO_1000091101" description="UDP-N-acetylmuramate--L-alanine ligase">
    <location>
        <begin position="1"/>
        <end position="491"/>
    </location>
</feature>
<feature type="binding site" evidence="1">
    <location>
        <begin position="126"/>
        <end position="132"/>
    </location>
    <ligand>
        <name>ATP</name>
        <dbReference type="ChEBI" id="CHEBI:30616"/>
    </ligand>
</feature>
<reference key="1">
    <citation type="journal article" date="2008" name="DNA Res.">
        <title>Complete genome sequence and comparative analysis of the wild-type commensal Escherichia coli strain SE11 isolated from a healthy adult.</title>
        <authorList>
            <person name="Oshima K."/>
            <person name="Toh H."/>
            <person name="Ogura Y."/>
            <person name="Sasamoto H."/>
            <person name="Morita H."/>
            <person name="Park S.-H."/>
            <person name="Ooka T."/>
            <person name="Iyoda S."/>
            <person name="Taylor T.D."/>
            <person name="Hayashi T."/>
            <person name="Itoh K."/>
            <person name="Hattori M."/>
        </authorList>
    </citation>
    <scope>NUCLEOTIDE SEQUENCE [LARGE SCALE GENOMIC DNA]</scope>
    <source>
        <strain>SE11</strain>
    </source>
</reference>
<accession>B6HZ68</accession>
<sequence>MNTQQLAKLRSIVPEMRRVRHIHFVGIGGAGMGGIAEVLANEGYQISGSDLAPNPVTQQLMNLGATIYFNHRPENVRDASVVVVSSAISADNPEIVAAHEARIPVIRRAEMLAELMRFRHGIAIAGTHGKTTTTAMVSSIYAEAGLDPTFVNGGLVKAAGVHARLGHGRYLIAEADESDASFLHLQPMVAIVTNIEADHMDTYQGDFENLKQTFINFLHNLPFYGRAVMCVDDPVIRELLPRVGRQTTTYGFNEDADVRVEDYQQIGPQGHFTLLRQDKEPMRVTLNAPGRHNALNAAAAVAVATEEGIDDEAILRALESFQGTGRRFDFLGEFPLEPVNGKSGTAMLVDDYGHHPTEVDATIKAARAGWPDKNLVMLFQPHRFTRTRDLYDDFANVLTQVDTLLMLEVYPAGEAPIPGADSRSLCRTIRGRGKIDPILVPDPAQVAEMLAPVLTGNDLILVQGAGNIGKIARSLAEIKLKPQTPEEEQHD</sequence>
<keyword id="KW-0067">ATP-binding</keyword>
<keyword id="KW-0131">Cell cycle</keyword>
<keyword id="KW-0132">Cell division</keyword>
<keyword id="KW-0133">Cell shape</keyword>
<keyword id="KW-0961">Cell wall biogenesis/degradation</keyword>
<keyword id="KW-0963">Cytoplasm</keyword>
<keyword id="KW-0436">Ligase</keyword>
<keyword id="KW-0547">Nucleotide-binding</keyword>
<keyword id="KW-0573">Peptidoglycan synthesis</keyword>